<organism>
    <name type="scientific">Ateles belzebuth</name>
    <name type="common">White-bellied spider monkey</name>
    <dbReference type="NCBI Taxonomy" id="9507"/>
    <lineage>
        <taxon>Eukaryota</taxon>
        <taxon>Metazoa</taxon>
        <taxon>Chordata</taxon>
        <taxon>Craniata</taxon>
        <taxon>Vertebrata</taxon>
        <taxon>Euteleostomi</taxon>
        <taxon>Mammalia</taxon>
        <taxon>Eutheria</taxon>
        <taxon>Euarchontoglires</taxon>
        <taxon>Primates</taxon>
        <taxon>Haplorrhini</taxon>
        <taxon>Platyrrhini</taxon>
        <taxon>Atelidae</taxon>
        <taxon>Atelinae</taxon>
        <taxon>Ateles</taxon>
    </lineage>
</organism>
<gene>
    <name evidence="3" type="primary">FUT1</name>
</gene>
<proteinExistence type="inferred from homology"/>
<dbReference type="EC" id="2.4.1.69" evidence="2"/>
<dbReference type="EC" id="2.4.1.344" evidence="3"/>
<dbReference type="EMBL" id="AY219641">
    <property type="protein sequence ID" value="AAO43083.1"/>
    <property type="molecule type" value="Genomic_DNA"/>
</dbReference>
<dbReference type="SMR" id="Q866C7"/>
<dbReference type="CAZy" id="GT11">
    <property type="family name" value="Glycosyltransferase Family 11"/>
</dbReference>
<dbReference type="GlyCosmos" id="Q866C7">
    <property type="glycosylation" value="3 sites, No reported glycans"/>
</dbReference>
<dbReference type="UniPathway" id="UPA00378"/>
<dbReference type="GO" id="GO:0032580">
    <property type="term" value="C:Golgi cisterna membrane"/>
    <property type="evidence" value="ECO:0007669"/>
    <property type="project" value="UniProtKB-SubCell"/>
</dbReference>
<dbReference type="GO" id="GO:0031127">
    <property type="term" value="F:alpha-(1,2)-fucosyltransferase activity"/>
    <property type="evidence" value="ECO:0000250"/>
    <property type="project" value="UniProtKB"/>
</dbReference>
<dbReference type="GO" id="GO:0008107">
    <property type="term" value="F:galactoside 2-alpha-L-fucosyltransferase activity"/>
    <property type="evidence" value="ECO:0007669"/>
    <property type="project" value="UniProtKB-EC"/>
</dbReference>
<dbReference type="GO" id="GO:0005975">
    <property type="term" value="P:carbohydrate metabolic process"/>
    <property type="evidence" value="ECO:0007669"/>
    <property type="project" value="InterPro"/>
</dbReference>
<dbReference type="GO" id="GO:0036065">
    <property type="term" value="P:fucosylation"/>
    <property type="evidence" value="ECO:0000250"/>
    <property type="project" value="UniProtKB"/>
</dbReference>
<dbReference type="GO" id="GO:0006629">
    <property type="term" value="P:lipid metabolic process"/>
    <property type="evidence" value="ECO:0007669"/>
    <property type="project" value="UniProtKB-KW"/>
</dbReference>
<dbReference type="GO" id="GO:0021772">
    <property type="term" value="P:olfactory bulb development"/>
    <property type="evidence" value="ECO:0000250"/>
    <property type="project" value="UniProtKB"/>
</dbReference>
<dbReference type="GO" id="GO:0001954">
    <property type="term" value="P:positive regulation of cell-matrix adhesion"/>
    <property type="evidence" value="ECO:0000250"/>
    <property type="project" value="UniProtKB"/>
</dbReference>
<dbReference type="GO" id="GO:0010595">
    <property type="term" value="P:positive regulation of endothelial cell migration"/>
    <property type="evidence" value="ECO:0000250"/>
    <property type="project" value="UniProtKB"/>
</dbReference>
<dbReference type="GO" id="GO:1904906">
    <property type="term" value="P:positive regulation of endothelial cell-matrix adhesion via fibronectin"/>
    <property type="evidence" value="ECO:0000250"/>
    <property type="project" value="UniProtKB"/>
</dbReference>
<dbReference type="GO" id="GO:1903672">
    <property type="term" value="P:positive regulation of sprouting angiogenesis"/>
    <property type="evidence" value="ECO:0000250"/>
    <property type="project" value="UniProtKB"/>
</dbReference>
<dbReference type="GO" id="GO:0006486">
    <property type="term" value="P:protein glycosylation"/>
    <property type="evidence" value="ECO:0000250"/>
    <property type="project" value="UniProtKB"/>
</dbReference>
<dbReference type="GO" id="GO:0030155">
    <property type="term" value="P:regulation of cell adhesion"/>
    <property type="evidence" value="ECO:0000250"/>
    <property type="project" value="UniProtKB"/>
</dbReference>
<dbReference type="GO" id="GO:0001936">
    <property type="term" value="P:regulation of endothelial cell proliferation"/>
    <property type="evidence" value="ECO:0000250"/>
    <property type="project" value="UniProtKB"/>
</dbReference>
<dbReference type="CDD" id="cd11301">
    <property type="entry name" value="Fut1_Fut2_like"/>
    <property type="match status" value="1"/>
</dbReference>
<dbReference type="InterPro" id="IPR002516">
    <property type="entry name" value="Glyco_trans_11"/>
</dbReference>
<dbReference type="PANTHER" id="PTHR11927">
    <property type="entry name" value="GALACTOSIDE 2-L-FUCOSYLTRANSFERASE"/>
    <property type="match status" value="1"/>
</dbReference>
<dbReference type="PANTHER" id="PTHR11927:SF4">
    <property type="entry name" value="GALACTOSIDE ALPHA-(1,2)-FUCOSYLTRANSFERASE 1"/>
    <property type="match status" value="1"/>
</dbReference>
<dbReference type="Pfam" id="PF01531">
    <property type="entry name" value="Glyco_transf_11"/>
    <property type="match status" value="1"/>
</dbReference>
<protein>
    <recommendedName>
        <fullName evidence="3">Galactoside alpha-(1,2)-fucosyltransferase 1</fullName>
    </recommendedName>
    <alternativeName>
        <fullName>Alpha(1,2)FT 1</fullName>
    </alternativeName>
    <alternativeName>
        <fullName>Fucosyltransferase 1</fullName>
    </alternativeName>
    <alternativeName>
        <fullName>GDP-L-fucose:beta-D-galactoside 2-alpha-L-fucosyltransferase 1</fullName>
    </alternativeName>
    <alternativeName>
        <fullName evidence="2">Type 1 galactoside alpha-(1,2)-fucosyltransferase FUT1</fullName>
        <ecNumber evidence="2">2.4.1.69</ecNumber>
    </alternativeName>
    <alternativeName>
        <fullName evidence="3">Type 2 galactoside alpha-(1,2)-fucosyltransferase FUT1</fullName>
        <ecNumber evidence="3">2.4.1.344</ecNumber>
    </alternativeName>
</protein>
<sequence>MWPLSHRHLCLAFLLVCVLSAISFFLHIHQDSFRHGLGLSVLCPDRRLVTHPVAIFCLPGTPMSPNTSSPCPQHPASLSGTWTIYPDGRFGNQMGQYATLLALAQLNGRRAFILPAMHTALAPVFRITLPVLAPEVDSLTPWRELRLHDWMSEEYADLGDPFLKLSGFPCSWTFFHHLREQIRSEFTLHDHLREEAQRVLRRLHLGRSGDRPRTFVGVHVRRGDYLQVMPQRWKGVVGNSAYLREAMDWFRARHEAPVFVVTSNGMEWCRENIDASKGDVVFAGDGQEASPWKDFALLTQCNHTIMTIGTFGFWAAYLAGGDTVYLANFTLPDSEFLKIFKPEAAFLPEWVGINADLSPLWTLAEP</sequence>
<accession>Q866C7</accession>
<comment type="function">
    <text evidence="2 3">Catalyzes the transfer of L-fucose, from a guanosine diphosphate-beta-L-fucose, to the terminal galactose residue of glycoconjugates through an alpha(1,2) linkage leading to H antigen synthesis that is an intermediate substrate in the synthesis of ABO blood group antigens. H antigen is essential for maturation of the glomerular layer of the main olfactory bulb, in cell migration and early cell-cell contacts during tumor associated angiogenesis (By similarity). Preferentially fucosylates soluble lactose and to a lesser extent fucosylates glycolipids gangliosides GA1 and GM1a (By similarity).</text>
</comment>
<comment type="catalytic activity">
    <reaction evidence="3">
        <text>a beta-D-galactosyl-(1-&gt;4)-N-acetyl-beta-D-glucosaminyl derivative + GDP-beta-L-fucose = an alpha-L-Fuc-(1-&gt;2)-beta-D-Gal-(1-&gt;4)-beta-D-GlcNAc derivative + GDP + H(+)</text>
        <dbReference type="Rhea" id="RHEA:50668"/>
        <dbReference type="ChEBI" id="CHEBI:15378"/>
        <dbReference type="ChEBI" id="CHEBI:57273"/>
        <dbReference type="ChEBI" id="CHEBI:58189"/>
        <dbReference type="ChEBI" id="CHEBI:133507"/>
        <dbReference type="ChEBI" id="CHEBI:133510"/>
        <dbReference type="EC" id="2.4.1.344"/>
    </reaction>
</comment>
<comment type="catalytic activity">
    <reaction evidence="2">
        <text>a ganglioside GA1 + GDP-beta-L-fucose = a ganglioside Fuc-GA1 + GDP + H(+)</text>
        <dbReference type="Rhea" id="RHEA:48320"/>
        <dbReference type="ChEBI" id="CHEBI:15378"/>
        <dbReference type="ChEBI" id="CHEBI:57273"/>
        <dbReference type="ChEBI" id="CHEBI:58189"/>
        <dbReference type="ChEBI" id="CHEBI:88069"/>
        <dbReference type="ChEBI" id="CHEBI:90262"/>
    </reaction>
    <physiologicalReaction direction="left-to-right" evidence="2">
        <dbReference type="Rhea" id="RHEA:48321"/>
    </physiologicalReaction>
</comment>
<comment type="catalytic activity">
    <reaction evidence="2">
        <text>a beta-D-Gal-(1-&gt;3)-beta-D-GlcNAc-(1-&gt;3)-beta-D-Gal-(1-&gt;4)-beta-D-Glc-(1&lt;-&gt;1')-Cer(d18:1(4E)) + GDP-beta-L-fucose = alpha-L-fucosyl-(1-&gt;2)- beta-D-galactosyl-(1-&gt;3)-N-acetyl-beta-D-glucosaminyl-(1-&gt;3)-beta-D-galactosyl-(1-&gt;4)-beta-D-glucosyl-(1&lt;-&gt;1')-N-acylsphing-4-enine + GDP + H(+)</text>
        <dbReference type="Rhea" id="RHEA:32175"/>
        <dbReference type="ChEBI" id="CHEBI:15378"/>
        <dbReference type="ChEBI" id="CHEBI:17292"/>
        <dbReference type="ChEBI" id="CHEBI:28743"/>
        <dbReference type="ChEBI" id="CHEBI:57273"/>
        <dbReference type="ChEBI" id="CHEBI:58189"/>
        <dbReference type="EC" id="2.4.1.69"/>
    </reaction>
    <physiologicalReaction direction="left-to-right" evidence="2">
        <dbReference type="Rhea" id="RHEA:32176"/>
    </physiologicalReaction>
</comment>
<comment type="catalytic activity">
    <reaction evidence="2">
        <text>a neolactoside nLc4Cer(d18:1(4E)) + GDP-beta-L-fucose = a neolactoside IV(2)-alpha-Fuc-nLc4Cer(d18:1(4E)) + GDP + H(+)</text>
        <dbReference type="Rhea" id="RHEA:48304"/>
        <dbReference type="ChEBI" id="CHEBI:15378"/>
        <dbReference type="ChEBI" id="CHEBI:17006"/>
        <dbReference type="ChEBI" id="CHEBI:28691"/>
        <dbReference type="ChEBI" id="CHEBI:57273"/>
        <dbReference type="ChEBI" id="CHEBI:58189"/>
    </reaction>
    <physiologicalReaction direction="left-to-right" evidence="2">
        <dbReference type="Rhea" id="RHEA:48305"/>
    </physiologicalReaction>
</comment>
<comment type="catalytic activity">
    <reaction evidence="1">
        <text>a ganglioside GM1 + GDP-beta-L-fucose = a ganglioside Fuc-GM1 + GDP + H(+)</text>
        <dbReference type="Rhea" id="RHEA:48292"/>
        <dbReference type="ChEBI" id="CHEBI:15378"/>
        <dbReference type="ChEBI" id="CHEBI:57273"/>
        <dbReference type="ChEBI" id="CHEBI:58189"/>
        <dbReference type="ChEBI" id="CHEBI:82639"/>
        <dbReference type="ChEBI" id="CHEBI:90189"/>
    </reaction>
    <physiologicalReaction direction="left-to-right" evidence="1">
        <dbReference type="Rhea" id="RHEA:48293"/>
    </physiologicalReaction>
</comment>
<comment type="catalytic activity">
    <reaction evidence="1">
        <text>beta-D-galactosyl-(1-&gt;3)-N-acetyl-D-galactosamine + GDP-beta-L-fucose = alpha-L-fucosyl-(1-&gt;2)-beta-D-galactosyl-(1-&gt;3)-N-acetyl-D-galactosamine + GDP + H(+)</text>
        <dbReference type="Rhea" id="RHEA:62964"/>
        <dbReference type="ChEBI" id="CHEBI:15378"/>
        <dbReference type="ChEBI" id="CHEBI:57273"/>
        <dbReference type="ChEBI" id="CHEBI:58189"/>
        <dbReference type="ChEBI" id="CHEBI:84728"/>
        <dbReference type="ChEBI" id="CHEBI:546807"/>
    </reaction>
    <physiologicalReaction direction="left-to-right" evidence="1">
        <dbReference type="Rhea" id="RHEA:62965"/>
    </physiologicalReaction>
</comment>
<comment type="pathway">
    <text evidence="3">Protein modification; protein glycosylation.</text>
</comment>
<comment type="subcellular location">
    <subcellularLocation>
        <location evidence="2">Golgi apparatus</location>
        <location evidence="2">Golgi stack membrane</location>
        <topology evidence="2">Single-pass type II membrane protein</topology>
    </subcellularLocation>
    <text evidence="2">Membrane-bound form in trans cisternae of Golgi.</text>
</comment>
<comment type="similarity">
    <text evidence="5">Belongs to the glycosyltransferase 11 family.</text>
</comment>
<evidence type="ECO:0000250" key="1">
    <source>
        <dbReference type="UniProtKB" id="F6Q1T7"/>
    </source>
</evidence>
<evidence type="ECO:0000250" key="2">
    <source>
        <dbReference type="UniProtKB" id="O09160"/>
    </source>
</evidence>
<evidence type="ECO:0000250" key="3">
    <source>
        <dbReference type="UniProtKB" id="P19526"/>
    </source>
</evidence>
<evidence type="ECO:0000255" key="4"/>
<evidence type="ECO:0000305" key="5"/>
<keyword id="KW-0325">Glycoprotein</keyword>
<keyword id="KW-0328">Glycosyltransferase</keyword>
<keyword id="KW-0333">Golgi apparatus</keyword>
<keyword id="KW-0443">Lipid metabolism</keyword>
<keyword id="KW-0472">Membrane</keyword>
<keyword id="KW-0735">Signal-anchor</keyword>
<keyword id="KW-0808">Transferase</keyword>
<keyword id="KW-0812">Transmembrane</keyword>
<keyword id="KW-1133">Transmembrane helix</keyword>
<reference key="1">
    <citation type="submission" date="2003-01" db="EMBL/GenBank/DDBJ databases">
        <title>Molecular evolution of the H (FUT1) gene in New World monkeys (Primates, Platyrrhini): evidence of divergent evolution and purifying selection.</title>
        <authorList>
            <person name="Borges B.N."/>
            <person name="Harada M.L."/>
        </authorList>
    </citation>
    <scope>NUCLEOTIDE SEQUENCE [GENOMIC DNA]</scope>
</reference>
<name>FUT1_ATEBE</name>
<feature type="chain" id="PRO_0000149090" description="Galactoside alpha-(1,2)-fucosyltransferase 1">
    <location>
        <begin position="1"/>
        <end position="366"/>
    </location>
</feature>
<feature type="topological domain" description="Cytoplasmic" evidence="4">
    <location>
        <begin position="1"/>
        <end position="8"/>
    </location>
</feature>
<feature type="transmembrane region" description="Helical; Signal-anchor for type II membrane protein" evidence="4">
    <location>
        <begin position="9"/>
        <end position="25"/>
    </location>
</feature>
<feature type="topological domain" description="Lumenal" evidence="4">
    <location>
        <begin position="26"/>
        <end position="366"/>
    </location>
</feature>
<feature type="glycosylation site" description="N-linked (GlcNAc...) asparagine" evidence="4">
    <location>
        <position position="66"/>
    </location>
</feature>
<feature type="glycosylation site" description="N-linked (GlcNAc...) asparagine" evidence="4">
    <location>
        <position position="302"/>
    </location>
</feature>
<feature type="glycosylation site" description="N-linked (GlcNAc...) asparagine" evidence="4">
    <location>
        <position position="328"/>
    </location>
</feature>